<organism>
    <name type="scientific">Desulforudis audaxviator (strain MP104C)</name>
    <dbReference type="NCBI Taxonomy" id="477974"/>
    <lineage>
        <taxon>Bacteria</taxon>
        <taxon>Bacillati</taxon>
        <taxon>Bacillota</taxon>
        <taxon>Clostridia</taxon>
        <taxon>Thermoanaerobacterales</taxon>
        <taxon>Candidatus Desulforudaceae</taxon>
        <taxon>Candidatus Desulforudis</taxon>
    </lineage>
</organism>
<sequence>MPKHGKKYVEAAKQVDSEKQYEVREALELVRKLAPAKFDETVEAAVKLGVDPRHADQQVRGAVVLPHGTGKTRTVLVFAKGEKVTEAEKAGADYVGGEEMVAKIQGGWMEFDVAIATPDMMSAVGKIGRILGPRGLMPNPKTGTVTFDIARAVAEVKAGKIQYRVDKAGNIHAPIGKVSFEVEKLEENLKTLIDALIRAKPAAAKGQYLRGIVVTSTMGPGVRVNTRKFIG</sequence>
<keyword id="KW-1185">Reference proteome</keyword>
<keyword id="KW-0678">Repressor</keyword>
<keyword id="KW-0687">Ribonucleoprotein</keyword>
<keyword id="KW-0689">Ribosomal protein</keyword>
<keyword id="KW-0694">RNA-binding</keyword>
<keyword id="KW-0699">rRNA-binding</keyword>
<keyword id="KW-0810">Translation regulation</keyword>
<keyword id="KW-0820">tRNA-binding</keyword>
<evidence type="ECO:0000255" key="1">
    <source>
        <dbReference type="HAMAP-Rule" id="MF_01318"/>
    </source>
</evidence>
<evidence type="ECO:0000305" key="2"/>
<dbReference type="EMBL" id="CP000860">
    <property type="protein sequence ID" value="ACA58773.1"/>
    <property type="molecule type" value="Genomic_DNA"/>
</dbReference>
<dbReference type="RefSeq" id="WP_012301366.1">
    <property type="nucleotide sequence ID" value="NC_010424.1"/>
</dbReference>
<dbReference type="SMR" id="B1I1L3"/>
<dbReference type="STRING" id="477974.Daud_0212"/>
<dbReference type="KEGG" id="dau:Daud_0212"/>
<dbReference type="eggNOG" id="COG0081">
    <property type="taxonomic scope" value="Bacteria"/>
</dbReference>
<dbReference type="HOGENOM" id="CLU_062853_0_0_9"/>
<dbReference type="OrthoDB" id="9803740at2"/>
<dbReference type="Proteomes" id="UP000008544">
    <property type="component" value="Chromosome"/>
</dbReference>
<dbReference type="GO" id="GO:0015934">
    <property type="term" value="C:large ribosomal subunit"/>
    <property type="evidence" value="ECO:0007669"/>
    <property type="project" value="InterPro"/>
</dbReference>
<dbReference type="GO" id="GO:0019843">
    <property type="term" value="F:rRNA binding"/>
    <property type="evidence" value="ECO:0007669"/>
    <property type="project" value="UniProtKB-UniRule"/>
</dbReference>
<dbReference type="GO" id="GO:0003735">
    <property type="term" value="F:structural constituent of ribosome"/>
    <property type="evidence" value="ECO:0007669"/>
    <property type="project" value="InterPro"/>
</dbReference>
<dbReference type="GO" id="GO:0000049">
    <property type="term" value="F:tRNA binding"/>
    <property type="evidence" value="ECO:0007669"/>
    <property type="project" value="UniProtKB-KW"/>
</dbReference>
<dbReference type="GO" id="GO:0006417">
    <property type="term" value="P:regulation of translation"/>
    <property type="evidence" value="ECO:0007669"/>
    <property type="project" value="UniProtKB-KW"/>
</dbReference>
<dbReference type="GO" id="GO:0006412">
    <property type="term" value="P:translation"/>
    <property type="evidence" value="ECO:0007669"/>
    <property type="project" value="UniProtKB-UniRule"/>
</dbReference>
<dbReference type="CDD" id="cd00403">
    <property type="entry name" value="Ribosomal_L1"/>
    <property type="match status" value="1"/>
</dbReference>
<dbReference type="FunFam" id="3.40.50.790:FF:000001">
    <property type="entry name" value="50S ribosomal protein L1"/>
    <property type="match status" value="1"/>
</dbReference>
<dbReference type="Gene3D" id="3.30.190.20">
    <property type="match status" value="1"/>
</dbReference>
<dbReference type="Gene3D" id="3.40.50.790">
    <property type="match status" value="1"/>
</dbReference>
<dbReference type="HAMAP" id="MF_01318_B">
    <property type="entry name" value="Ribosomal_uL1_B"/>
    <property type="match status" value="1"/>
</dbReference>
<dbReference type="InterPro" id="IPR005878">
    <property type="entry name" value="Ribosom_uL1_bac-type"/>
</dbReference>
<dbReference type="InterPro" id="IPR002143">
    <property type="entry name" value="Ribosomal_uL1"/>
</dbReference>
<dbReference type="InterPro" id="IPR023674">
    <property type="entry name" value="Ribosomal_uL1-like"/>
</dbReference>
<dbReference type="InterPro" id="IPR028364">
    <property type="entry name" value="Ribosomal_uL1/biogenesis"/>
</dbReference>
<dbReference type="InterPro" id="IPR016095">
    <property type="entry name" value="Ribosomal_uL1_3-a/b-sand"/>
</dbReference>
<dbReference type="InterPro" id="IPR023673">
    <property type="entry name" value="Ribosomal_uL1_CS"/>
</dbReference>
<dbReference type="NCBIfam" id="TIGR01169">
    <property type="entry name" value="rplA_bact"/>
    <property type="match status" value="1"/>
</dbReference>
<dbReference type="PANTHER" id="PTHR36427">
    <property type="entry name" value="54S RIBOSOMAL PROTEIN L1, MITOCHONDRIAL"/>
    <property type="match status" value="1"/>
</dbReference>
<dbReference type="PANTHER" id="PTHR36427:SF3">
    <property type="entry name" value="LARGE RIBOSOMAL SUBUNIT PROTEIN UL1M"/>
    <property type="match status" value="1"/>
</dbReference>
<dbReference type="Pfam" id="PF00687">
    <property type="entry name" value="Ribosomal_L1"/>
    <property type="match status" value="1"/>
</dbReference>
<dbReference type="PIRSF" id="PIRSF002155">
    <property type="entry name" value="Ribosomal_L1"/>
    <property type="match status" value="1"/>
</dbReference>
<dbReference type="SUPFAM" id="SSF56808">
    <property type="entry name" value="Ribosomal protein L1"/>
    <property type="match status" value="1"/>
</dbReference>
<dbReference type="PROSITE" id="PS01199">
    <property type="entry name" value="RIBOSOMAL_L1"/>
    <property type="match status" value="1"/>
</dbReference>
<comment type="function">
    <text evidence="1">Binds directly to 23S rRNA. The L1 stalk is quite mobile in the ribosome, and is involved in E site tRNA release.</text>
</comment>
<comment type="function">
    <text evidence="1">Protein L1 is also a translational repressor protein, it controls the translation of the L11 operon by binding to its mRNA.</text>
</comment>
<comment type="subunit">
    <text evidence="1">Part of the 50S ribosomal subunit.</text>
</comment>
<comment type="similarity">
    <text evidence="1">Belongs to the universal ribosomal protein uL1 family.</text>
</comment>
<feature type="chain" id="PRO_1000141391" description="Large ribosomal subunit protein uL1">
    <location>
        <begin position="1"/>
        <end position="231"/>
    </location>
</feature>
<proteinExistence type="inferred from homology"/>
<accession>B1I1L3</accession>
<gene>
    <name evidence="1" type="primary">rplA</name>
    <name type="ordered locus">Daud_0212</name>
</gene>
<name>RL1_DESAP</name>
<protein>
    <recommendedName>
        <fullName evidence="1">Large ribosomal subunit protein uL1</fullName>
    </recommendedName>
    <alternativeName>
        <fullName evidence="2">50S ribosomal protein L1</fullName>
    </alternativeName>
</protein>
<reference key="1">
    <citation type="submission" date="2007-10" db="EMBL/GenBank/DDBJ databases">
        <title>Complete sequence of chromosome of Desulforudis audaxviator MP104C.</title>
        <authorList>
            <person name="Copeland A."/>
            <person name="Lucas S."/>
            <person name="Lapidus A."/>
            <person name="Barry K."/>
            <person name="Glavina del Rio T."/>
            <person name="Dalin E."/>
            <person name="Tice H."/>
            <person name="Bruce D."/>
            <person name="Pitluck S."/>
            <person name="Lowry S.R."/>
            <person name="Larimer F."/>
            <person name="Land M.L."/>
            <person name="Hauser L."/>
            <person name="Kyrpides N."/>
            <person name="Ivanova N.N."/>
            <person name="Richardson P."/>
        </authorList>
    </citation>
    <scope>NUCLEOTIDE SEQUENCE [LARGE SCALE GENOMIC DNA]</scope>
    <source>
        <strain>MP104C</strain>
    </source>
</reference>